<protein>
    <recommendedName>
        <fullName>Uncharacterized protein MJ0859</fullName>
    </recommendedName>
</protein>
<gene>
    <name type="ordered locus">MJ0859</name>
</gene>
<proteinExistence type="predicted"/>
<dbReference type="EMBL" id="L77117">
    <property type="protein sequence ID" value="AAB98874.1"/>
    <property type="molecule type" value="Genomic_DNA"/>
</dbReference>
<dbReference type="PIR" id="C64407">
    <property type="entry name" value="C64407"/>
</dbReference>
<dbReference type="SMR" id="Q58269"/>
<dbReference type="FunCoup" id="Q58269">
    <property type="interactions" value="1"/>
</dbReference>
<dbReference type="STRING" id="243232.MJ_0859"/>
<dbReference type="PaxDb" id="243232-MJ_0859"/>
<dbReference type="EnsemblBacteria" id="AAB98874">
    <property type="protein sequence ID" value="AAB98874"/>
    <property type="gene ID" value="MJ_0859"/>
</dbReference>
<dbReference type="KEGG" id="mja:MJ_0859"/>
<dbReference type="eggNOG" id="arCOG01724">
    <property type="taxonomic scope" value="Archaea"/>
</dbReference>
<dbReference type="HOGENOM" id="CLU_1736436_0_0_2"/>
<dbReference type="InParanoid" id="Q58269"/>
<dbReference type="PhylomeDB" id="Q58269"/>
<dbReference type="Proteomes" id="UP000000805">
    <property type="component" value="Chromosome"/>
</dbReference>
<dbReference type="Gene3D" id="2.40.128.400">
    <property type="match status" value="1"/>
</dbReference>
<dbReference type="Gene3D" id="2.40.50.100">
    <property type="match status" value="1"/>
</dbReference>
<dbReference type="InterPro" id="IPR019217">
    <property type="entry name" value="DUF2118"/>
</dbReference>
<dbReference type="Pfam" id="PF09891">
    <property type="entry name" value="DUF2118"/>
    <property type="match status" value="1"/>
</dbReference>
<dbReference type="PIRSF" id="PIRSF019115">
    <property type="entry name" value="UCP019115"/>
    <property type="match status" value="1"/>
</dbReference>
<name>Y859_METJA</name>
<sequence length="164" mass="18986">MNIMRIPRLYVENAEKHEGRKVVIENGGKVIKFLDKDEEYEGDGKVLYQVIYDDFDNYVLMGTVTKDMIIEYEVGGVRQITYIKKGTKLLEIPAEGYKVYPIVDFGCRILGGHRIAALQSRKGDIRFVNTPVNGIVLFLKEVPAKRENYVFYILPEEEIKFEEE</sequence>
<feature type="chain" id="PRO_0000107084" description="Uncharacterized protein MJ0859">
    <location>
        <begin position="1"/>
        <end position="164"/>
    </location>
</feature>
<keyword id="KW-1185">Reference proteome</keyword>
<reference key="1">
    <citation type="journal article" date="1996" name="Science">
        <title>Complete genome sequence of the methanogenic archaeon, Methanococcus jannaschii.</title>
        <authorList>
            <person name="Bult C.J."/>
            <person name="White O."/>
            <person name="Olsen G.J."/>
            <person name="Zhou L."/>
            <person name="Fleischmann R.D."/>
            <person name="Sutton G.G."/>
            <person name="Blake J.A."/>
            <person name="FitzGerald L.M."/>
            <person name="Clayton R.A."/>
            <person name="Gocayne J.D."/>
            <person name="Kerlavage A.R."/>
            <person name="Dougherty B.A."/>
            <person name="Tomb J.-F."/>
            <person name="Adams M.D."/>
            <person name="Reich C.I."/>
            <person name="Overbeek R."/>
            <person name="Kirkness E.F."/>
            <person name="Weinstock K.G."/>
            <person name="Merrick J.M."/>
            <person name="Glodek A."/>
            <person name="Scott J.L."/>
            <person name="Geoghagen N.S.M."/>
            <person name="Weidman J.F."/>
            <person name="Fuhrmann J.L."/>
            <person name="Nguyen D."/>
            <person name="Utterback T.R."/>
            <person name="Kelley J.M."/>
            <person name="Peterson J.D."/>
            <person name="Sadow P.W."/>
            <person name="Hanna M.C."/>
            <person name="Cotton M.D."/>
            <person name="Roberts K.M."/>
            <person name="Hurst M.A."/>
            <person name="Kaine B.P."/>
            <person name="Borodovsky M."/>
            <person name="Klenk H.-P."/>
            <person name="Fraser C.M."/>
            <person name="Smith H.O."/>
            <person name="Woese C.R."/>
            <person name="Venter J.C."/>
        </authorList>
    </citation>
    <scope>NUCLEOTIDE SEQUENCE [LARGE SCALE GENOMIC DNA]</scope>
    <source>
        <strain>ATCC 43067 / DSM 2661 / JAL-1 / JCM 10045 / NBRC 100440</strain>
    </source>
</reference>
<organism>
    <name type="scientific">Methanocaldococcus jannaschii (strain ATCC 43067 / DSM 2661 / JAL-1 / JCM 10045 / NBRC 100440)</name>
    <name type="common">Methanococcus jannaschii</name>
    <dbReference type="NCBI Taxonomy" id="243232"/>
    <lineage>
        <taxon>Archaea</taxon>
        <taxon>Methanobacteriati</taxon>
        <taxon>Methanobacteriota</taxon>
        <taxon>Methanomada group</taxon>
        <taxon>Methanococci</taxon>
        <taxon>Methanococcales</taxon>
        <taxon>Methanocaldococcaceae</taxon>
        <taxon>Methanocaldococcus</taxon>
    </lineage>
</organism>
<accession>Q58269</accession>